<gene>
    <name type="primary">rpsH</name>
    <name type="ordered locus">STY4372</name>
    <name type="ordered locus">t4079</name>
</gene>
<feature type="initiator methionine" description="Removed" evidence="1">
    <location>
        <position position="1"/>
    </location>
</feature>
<feature type="chain" id="PRO_0000126478" description="Small ribosomal subunit protein uS8">
    <location>
        <begin position="2"/>
        <end position="130"/>
    </location>
</feature>
<comment type="function">
    <text evidence="1">One of the primary rRNA binding proteins, it binds directly to 16S rRNA central domain where it helps coordinate assembly of the platform of the 30S subunit.</text>
</comment>
<comment type="subunit">
    <text evidence="1">Part of the 30S ribosomal subunit. Contacts proteins S5 and S12 (By similarity).</text>
</comment>
<comment type="similarity">
    <text evidence="2">Belongs to the universal ribosomal protein uS8 family.</text>
</comment>
<proteinExistence type="inferred from homology"/>
<dbReference type="EMBL" id="AL513382">
    <property type="protein sequence ID" value="CAD09160.1"/>
    <property type="molecule type" value="Genomic_DNA"/>
</dbReference>
<dbReference type="EMBL" id="AE014613">
    <property type="protein sequence ID" value="AAO71546.1"/>
    <property type="molecule type" value="Genomic_DNA"/>
</dbReference>
<dbReference type="RefSeq" id="NP_458474.1">
    <property type="nucleotide sequence ID" value="NC_003198.1"/>
</dbReference>
<dbReference type="RefSeq" id="WP_000062611.1">
    <property type="nucleotide sequence ID" value="NZ_WSUR01000046.1"/>
</dbReference>
<dbReference type="SMR" id="P0A7X1"/>
<dbReference type="STRING" id="220341.gene:17588200"/>
<dbReference type="GeneID" id="93778681"/>
<dbReference type="KEGG" id="stt:t4079"/>
<dbReference type="KEGG" id="sty:STY4372"/>
<dbReference type="PATRIC" id="fig|220341.7.peg.4468"/>
<dbReference type="eggNOG" id="COG0096">
    <property type="taxonomic scope" value="Bacteria"/>
</dbReference>
<dbReference type="HOGENOM" id="CLU_098428_0_0_6"/>
<dbReference type="OMA" id="NSAYHDT"/>
<dbReference type="OrthoDB" id="9802617at2"/>
<dbReference type="Proteomes" id="UP000000541">
    <property type="component" value="Chromosome"/>
</dbReference>
<dbReference type="Proteomes" id="UP000002670">
    <property type="component" value="Chromosome"/>
</dbReference>
<dbReference type="GO" id="GO:1990904">
    <property type="term" value="C:ribonucleoprotein complex"/>
    <property type="evidence" value="ECO:0007669"/>
    <property type="project" value="UniProtKB-KW"/>
</dbReference>
<dbReference type="GO" id="GO:0005840">
    <property type="term" value="C:ribosome"/>
    <property type="evidence" value="ECO:0007669"/>
    <property type="project" value="UniProtKB-KW"/>
</dbReference>
<dbReference type="GO" id="GO:0019843">
    <property type="term" value="F:rRNA binding"/>
    <property type="evidence" value="ECO:0007669"/>
    <property type="project" value="UniProtKB-UniRule"/>
</dbReference>
<dbReference type="GO" id="GO:0003735">
    <property type="term" value="F:structural constituent of ribosome"/>
    <property type="evidence" value="ECO:0007669"/>
    <property type="project" value="InterPro"/>
</dbReference>
<dbReference type="GO" id="GO:0006412">
    <property type="term" value="P:translation"/>
    <property type="evidence" value="ECO:0007669"/>
    <property type="project" value="UniProtKB-UniRule"/>
</dbReference>
<dbReference type="FunFam" id="3.30.1370.30:FF:000003">
    <property type="entry name" value="30S ribosomal protein S8"/>
    <property type="match status" value="1"/>
</dbReference>
<dbReference type="FunFam" id="3.30.1490.10:FF:000001">
    <property type="entry name" value="30S ribosomal protein S8"/>
    <property type="match status" value="1"/>
</dbReference>
<dbReference type="Gene3D" id="3.30.1370.30">
    <property type="match status" value="1"/>
</dbReference>
<dbReference type="Gene3D" id="3.30.1490.10">
    <property type="match status" value="1"/>
</dbReference>
<dbReference type="HAMAP" id="MF_01302_B">
    <property type="entry name" value="Ribosomal_uS8_B"/>
    <property type="match status" value="1"/>
</dbReference>
<dbReference type="InterPro" id="IPR000630">
    <property type="entry name" value="Ribosomal_uS8"/>
</dbReference>
<dbReference type="InterPro" id="IPR047863">
    <property type="entry name" value="Ribosomal_uS8_CS"/>
</dbReference>
<dbReference type="InterPro" id="IPR035987">
    <property type="entry name" value="Ribosomal_uS8_sf"/>
</dbReference>
<dbReference type="NCBIfam" id="NF001109">
    <property type="entry name" value="PRK00136.1"/>
    <property type="match status" value="1"/>
</dbReference>
<dbReference type="PANTHER" id="PTHR11758">
    <property type="entry name" value="40S RIBOSOMAL PROTEIN S15A"/>
    <property type="match status" value="1"/>
</dbReference>
<dbReference type="Pfam" id="PF00410">
    <property type="entry name" value="Ribosomal_S8"/>
    <property type="match status" value="1"/>
</dbReference>
<dbReference type="SUPFAM" id="SSF56047">
    <property type="entry name" value="Ribosomal protein S8"/>
    <property type="match status" value="1"/>
</dbReference>
<dbReference type="PROSITE" id="PS00053">
    <property type="entry name" value="RIBOSOMAL_S8"/>
    <property type="match status" value="1"/>
</dbReference>
<keyword id="KW-0687">Ribonucleoprotein</keyword>
<keyword id="KW-0689">Ribosomal protein</keyword>
<keyword id="KW-0694">RNA-binding</keyword>
<keyword id="KW-0699">rRNA-binding</keyword>
<reference key="1">
    <citation type="journal article" date="2001" name="Nature">
        <title>Complete genome sequence of a multiple drug resistant Salmonella enterica serovar Typhi CT18.</title>
        <authorList>
            <person name="Parkhill J."/>
            <person name="Dougan G."/>
            <person name="James K.D."/>
            <person name="Thomson N.R."/>
            <person name="Pickard D."/>
            <person name="Wain J."/>
            <person name="Churcher C.M."/>
            <person name="Mungall K.L."/>
            <person name="Bentley S.D."/>
            <person name="Holden M.T.G."/>
            <person name="Sebaihia M."/>
            <person name="Baker S."/>
            <person name="Basham D."/>
            <person name="Brooks K."/>
            <person name="Chillingworth T."/>
            <person name="Connerton P."/>
            <person name="Cronin A."/>
            <person name="Davis P."/>
            <person name="Davies R.M."/>
            <person name="Dowd L."/>
            <person name="White N."/>
            <person name="Farrar J."/>
            <person name="Feltwell T."/>
            <person name="Hamlin N."/>
            <person name="Haque A."/>
            <person name="Hien T.T."/>
            <person name="Holroyd S."/>
            <person name="Jagels K."/>
            <person name="Krogh A."/>
            <person name="Larsen T.S."/>
            <person name="Leather S."/>
            <person name="Moule S."/>
            <person name="O'Gaora P."/>
            <person name="Parry C."/>
            <person name="Quail M.A."/>
            <person name="Rutherford K.M."/>
            <person name="Simmonds M."/>
            <person name="Skelton J."/>
            <person name="Stevens K."/>
            <person name="Whitehead S."/>
            <person name="Barrell B.G."/>
        </authorList>
    </citation>
    <scope>NUCLEOTIDE SEQUENCE [LARGE SCALE GENOMIC DNA]</scope>
    <source>
        <strain>CT18</strain>
    </source>
</reference>
<reference key="2">
    <citation type="journal article" date="2003" name="J. Bacteriol.">
        <title>Comparative genomics of Salmonella enterica serovar Typhi strains Ty2 and CT18.</title>
        <authorList>
            <person name="Deng W."/>
            <person name="Liou S.-R."/>
            <person name="Plunkett G. III"/>
            <person name="Mayhew G.F."/>
            <person name="Rose D.J."/>
            <person name="Burland V."/>
            <person name="Kodoyianni V."/>
            <person name="Schwartz D.C."/>
            <person name="Blattner F.R."/>
        </authorList>
    </citation>
    <scope>NUCLEOTIDE SEQUENCE [LARGE SCALE GENOMIC DNA]</scope>
    <source>
        <strain>ATCC 700931 / Ty2</strain>
    </source>
</reference>
<protein>
    <recommendedName>
        <fullName evidence="2">Small ribosomal subunit protein uS8</fullName>
    </recommendedName>
    <alternativeName>
        <fullName>30S ribosomal protein S8</fullName>
    </alternativeName>
</protein>
<organism>
    <name type="scientific">Salmonella typhi</name>
    <dbReference type="NCBI Taxonomy" id="90370"/>
    <lineage>
        <taxon>Bacteria</taxon>
        <taxon>Pseudomonadati</taxon>
        <taxon>Pseudomonadota</taxon>
        <taxon>Gammaproteobacteria</taxon>
        <taxon>Enterobacterales</taxon>
        <taxon>Enterobacteriaceae</taxon>
        <taxon>Salmonella</taxon>
    </lineage>
</organism>
<name>RS8_SALTI</name>
<evidence type="ECO:0000250" key="1"/>
<evidence type="ECO:0000305" key="2"/>
<accession>P0A7X1</accession>
<accession>P02361</accession>
<sequence>MSMQDPIADMLTRIRNGQAANKAAVTMPSSKLKVAIANVLKEEGFIEDFKVEGDTKPELELTLKYFQGKAVVESIQRVSRPGLRIYKRKDELPKVMAGLGIAVVSTSKGVMTDRAARQAGLGGEIICYVA</sequence>